<organism>
    <name type="scientific">Invertebrate iridescent virus 6</name>
    <name type="common">IIV-6</name>
    <name type="synonym">Chilo iridescent virus</name>
    <dbReference type="NCBI Taxonomy" id="176652"/>
    <lineage>
        <taxon>Viruses</taxon>
        <taxon>Varidnaviria</taxon>
        <taxon>Bamfordvirae</taxon>
        <taxon>Nucleocytoviricota</taxon>
        <taxon>Megaviricetes</taxon>
        <taxon>Pimascovirales</taxon>
        <taxon>Iridoviridae</taxon>
        <taxon>Betairidovirinae</taxon>
        <taxon>Iridovirus</taxon>
    </lineage>
</organism>
<name>VF302_IIV6</name>
<organismHost>
    <name type="scientific">Acheta domesticus</name>
    <name type="common">House cricket</name>
    <dbReference type="NCBI Taxonomy" id="6997"/>
</organismHost>
<organismHost>
    <name type="scientific">Chilo suppressalis</name>
    <name type="common">Asiatic rice borer moth</name>
    <dbReference type="NCBI Taxonomy" id="168631"/>
</organismHost>
<organismHost>
    <name type="scientific">Gryllus bimaculatus</name>
    <name type="common">Two-spotted cricket</name>
    <dbReference type="NCBI Taxonomy" id="6999"/>
</organismHost>
<organismHost>
    <name type="scientific">Gryllus campestris</name>
    <dbReference type="NCBI Taxonomy" id="58607"/>
</organismHost>
<organismHost>
    <name type="scientific">Spodoptera frugiperda</name>
    <name type="common">Fall armyworm</name>
    <dbReference type="NCBI Taxonomy" id="7108"/>
</organismHost>
<feature type="chain" id="PRO_0000377849" description="Putative zinc finger protein 302L">
    <location>
        <begin position="1"/>
        <end position="378"/>
    </location>
</feature>
<feature type="zinc finger region" description="C2H2-type; degenerate" evidence="1">
    <location>
        <begin position="3"/>
        <end position="25"/>
    </location>
</feature>
<proteinExistence type="inferred from homology"/>
<protein>
    <recommendedName>
        <fullName>Putative zinc finger protein 302L</fullName>
    </recommendedName>
</protein>
<sequence length="378" mass="44105">MDIVCEFCDKSFDSKSKVNAHQRTKKCQQFRTITFVCRKCSSAILGYDNILFHVENCNGTTPILHKEIEDKIKVKNHNKEHDNKIFFGKGLNGKTVYIFNYEKSMLTYGSTNIISESIVSTIDNLVEKATLKSLNDAIQSFSKESFLQEILFKYPQPFSISDISKFFEYESRTVMAFLMAKDLNDLFEILFKECKLFPVCIVNDDIYVIDKVVRQNLDKWILEWKQIDYKEVSLSLKGFFLPVLNYAIKLFLNESNNNTTLKLLELIKEIADETKIRKLMSTFTKPIPVFEDIQNIFQNVKYIYNGSYKHTPMDTFIKNISYGSCFVKEKSIKTEHELYSLLMSLTKESEKTALIKKIKMNDNDDIVEIEKEMKLLKV</sequence>
<reference key="1">
    <citation type="journal article" date="2001" name="Virology">
        <title>Analysis of the first complete DNA sequence of an invertebrate iridovirus: coding strategy of the genome of Chilo iridescent virus.</title>
        <authorList>
            <person name="Jakob N.J."/>
            <person name="Mueller K."/>
            <person name="Bahr U."/>
            <person name="Darai G."/>
        </authorList>
    </citation>
    <scope>NUCLEOTIDE SEQUENCE [LARGE SCALE GENOMIC DNA]</scope>
</reference>
<reference key="2">
    <citation type="journal article" date="2007" name="Virol. J.">
        <title>Comparative genomic analysis of the family Iridoviridae: re-annotating and defining the core set of iridovirus genes.</title>
        <authorList>
            <person name="Eaton H.E."/>
            <person name="Metcalf J."/>
            <person name="Penny E."/>
            <person name="Tcherepanov V."/>
            <person name="Upton C."/>
            <person name="Brunetti C.R."/>
        </authorList>
    </citation>
    <scope>GENOME REANNOTATION</scope>
</reference>
<dbReference type="EMBL" id="AF303741">
    <property type="protein sequence ID" value="AAK82163.1"/>
    <property type="molecule type" value="Genomic_DNA"/>
</dbReference>
<dbReference type="RefSeq" id="NP_149765.1">
    <property type="nucleotide sequence ID" value="NC_003038.1"/>
</dbReference>
<dbReference type="KEGG" id="vg:1733236"/>
<dbReference type="OrthoDB" id="11188at10239"/>
<dbReference type="Proteomes" id="UP000001359">
    <property type="component" value="Genome"/>
</dbReference>
<dbReference type="GO" id="GO:0008270">
    <property type="term" value="F:zinc ion binding"/>
    <property type="evidence" value="ECO:0007669"/>
    <property type="project" value="UniProtKB-KW"/>
</dbReference>
<dbReference type="Gene3D" id="3.30.160.60">
    <property type="entry name" value="Classic Zinc Finger"/>
    <property type="match status" value="1"/>
</dbReference>
<dbReference type="InterPro" id="IPR013087">
    <property type="entry name" value="Znf_C2H2_type"/>
</dbReference>
<dbReference type="PROSITE" id="PS50157">
    <property type="entry name" value="ZINC_FINGER_C2H2_2"/>
    <property type="match status" value="1"/>
</dbReference>
<accession>Q91FM2</accession>
<keyword id="KW-0479">Metal-binding</keyword>
<keyword id="KW-1185">Reference proteome</keyword>
<keyword id="KW-0862">Zinc</keyword>
<keyword id="KW-0863">Zinc-finger</keyword>
<evidence type="ECO:0000255" key="1">
    <source>
        <dbReference type="PROSITE-ProRule" id="PRU00042"/>
    </source>
</evidence>
<evidence type="ECO:0000305" key="2"/>
<comment type="similarity">
    <text evidence="2">Belongs to the IIV-6 302L family.</text>
</comment>
<gene>
    <name type="ORF">IIV6-302L</name>
</gene>